<keyword id="KW-0025">Alternative splicing</keyword>
<keyword id="KW-0238">DNA-binding</keyword>
<keyword id="KW-0539">Nucleus</keyword>
<keyword id="KW-0597">Phosphoprotein</keyword>
<keyword id="KW-1267">Proteomics identification</keyword>
<keyword id="KW-1185">Reference proteome</keyword>
<name>PURG_HUMAN</name>
<comment type="subcellular location">
    <subcellularLocation>
        <location evidence="1">Nucleus</location>
    </subcellularLocation>
</comment>
<comment type="alternative products">
    <event type="alternative splicing"/>
    <isoform>
        <id>Q9UJV8-1</id>
        <name>1</name>
        <name>PURG-A</name>
        <sequence type="displayed"/>
    </isoform>
    <isoform>
        <id>Q9UJV8-2</id>
        <name>2</name>
        <name>PURG-B</name>
        <sequence type="described" ref="VSP_021319"/>
    </isoform>
</comment>
<comment type="tissue specificity">
    <text evidence="4">Isoform 1 is expressed in testis and glioblastoma. Isoform 2 is expressed in fetal lung.</text>
</comment>
<comment type="similarity">
    <text evidence="7">Belongs to the PUR DNA-binding protein family.</text>
</comment>
<feature type="chain" id="PRO_0000255952" description="Purine-rich element-binding protein gamma">
    <location>
        <begin position="1"/>
        <end position="347"/>
    </location>
</feature>
<feature type="DNA-binding region" evidence="1">
    <location>
        <begin position="51"/>
        <end position="293"/>
    </location>
</feature>
<feature type="region of interest" description="Disordered" evidence="3">
    <location>
        <begin position="1"/>
        <end position="34"/>
    </location>
</feature>
<feature type="region of interest" description="Disordered" evidence="3">
    <location>
        <begin position="133"/>
        <end position="169"/>
    </location>
</feature>
<feature type="compositionally biased region" description="Gly residues" evidence="3">
    <location>
        <begin position="9"/>
        <end position="24"/>
    </location>
</feature>
<feature type="compositionally biased region" description="Basic and acidic residues" evidence="3">
    <location>
        <begin position="134"/>
        <end position="146"/>
    </location>
</feature>
<feature type="modified residue" description="Phosphoserine" evidence="2">
    <location>
        <position position="160"/>
    </location>
</feature>
<feature type="modified residue" description="Phosphoserine" evidence="2">
    <location>
        <position position="163"/>
    </location>
</feature>
<feature type="modified residue" description="Phosphoserine" evidence="2">
    <location>
        <position position="339"/>
    </location>
</feature>
<feature type="splice variant" id="VSP_021319" description="In isoform 2." evidence="6">
    <original>VSEVRPPYRNTITVPFKAWTRFGENFIKYEEEMRKICNSHKEKRMDGRKASGEEQECLD</original>
    <variation>LTNYPKSRENINLFHCCQIKHKEQPHDTTKTVEE</variation>
    <location>
        <begin position="289"/>
        <end position="347"/>
    </location>
</feature>
<feature type="sequence variant" id="VAR_053613" description="In dbSNP:rs11574153.">
    <original>S</original>
    <variation>G</variation>
    <location>
        <position position="26"/>
    </location>
</feature>
<feature type="sequence variant" id="VAR_053614" description="In dbSNP:rs7464560.">
    <original>E</original>
    <variation>K</variation>
    <location>
        <position position="143"/>
    </location>
</feature>
<feature type="sequence variant" id="VAR_053615" description="In dbSNP:rs11574151.">
    <original>E</original>
    <variation>A</variation>
    <location>
        <position position="241"/>
    </location>
</feature>
<feature type="sequence variant" id="VAR_036317" description="In a breast cancer sample; somatic mutation." evidence="5">
    <original>K</original>
    <variation>T</variation>
    <location>
        <position position="316"/>
    </location>
</feature>
<evidence type="ECO:0000250" key="1"/>
<evidence type="ECO:0000250" key="2">
    <source>
        <dbReference type="UniProtKB" id="Q8R4E6"/>
    </source>
</evidence>
<evidence type="ECO:0000256" key="3">
    <source>
        <dbReference type="SAM" id="MobiDB-lite"/>
    </source>
</evidence>
<evidence type="ECO:0000269" key="4">
    <source>
    </source>
</evidence>
<evidence type="ECO:0000269" key="5">
    <source>
    </source>
</evidence>
<evidence type="ECO:0000303" key="6">
    <source>
    </source>
</evidence>
<evidence type="ECO:0000305" key="7"/>
<organism>
    <name type="scientific">Homo sapiens</name>
    <name type="common">Human</name>
    <dbReference type="NCBI Taxonomy" id="9606"/>
    <lineage>
        <taxon>Eukaryota</taxon>
        <taxon>Metazoa</taxon>
        <taxon>Chordata</taxon>
        <taxon>Craniata</taxon>
        <taxon>Vertebrata</taxon>
        <taxon>Euteleostomi</taxon>
        <taxon>Mammalia</taxon>
        <taxon>Eutheria</taxon>
        <taxon>Euarchontoglires</taxon>
        <taxon>Primates</taxon>
        <taxon>Haplorrhini</taxon>
        <taxon>Catarrhini</taxon>
        <taxon>Hominidae</taxon>
        <taxon>Homo</taxon>
    </lineage>
</organism>
<dbReference type="EMBL" id="AF195513">
    <property type="protein sequence ID" value="AAF03900.1"/>
    <property type="molecule type" value="mRNA"/>
</dbReference>
<dbReference type="EMBL" id="AY077841">
    <property type="protein sequence ID" value="AAL77218.1"/>
    <property type="molecule type" value="mRNA"/>
</dbReference>
<dbReference type="EMBL" id="BC106708">
    <property type="protein sequence ID" value="AAI06709.1"/>
    <property type="molecule type" value="mRNA"/>
</dbReference>
<dbReference type="CCDS" id="CCDS34878.1">
    <molecule id="Q9UJV8-2"/>
</dbReference>
<dbReference type="CCDS" id="CCDS6081.1">
    <molecule id="Q9UJV8-1"/>
</dbReference>
<dbReference type="RefSeq" id="NP_001015508.1">
    <molecule id="Q9UJV8-2"/>
    <property type="nucleotide sequence ID" value="NM_001015508.3"/>
</dbReference>
<dbReference type="RefSeq" id="NP_001310240.1">
    <molecule id="Q9UJV8-1"/>
    <property type="nucleotide sequence ID" value="NM_001323311.2"/>
</dbReference>
<dbReference type="RefSeq" id="NP_001310241.1">
    <molecule id="Q9UJV8-2"/>
    <property type="nucleotide sequence ID" value="NM_001323312.2"/>
</dbReference>
<dbReference type="RefSeq" id="NP_037489.1">
    <molecule id="Q9UJV8-1"/>
    <property type="nucleotide sequence ID" value="NM_013357.2"/>
</dbReference>
<dbReference type="SMR" id="Q9UJV8"/>
<dbReference type="BioGRID" id="118979">
    <property type="interactions" value="226"/>
</dbReference>
<dbReference type="FunCoup" id="Q9UJV8">
    <property type="interactions" value="2961"/>
</dbReference>
<dbReference type="IntAct" id="Q9UJV8">
    <property type="interactions" value="214"/>
</dbReference>
<dbReference type="MINT" id="Q9UJV8"/>
<dbReference type="STRING" id="9606.ENSP00000418721"/>
<dbReference type="iPTMnet" id="Q9UJV8"/>
<dbReference type="PhosphoSitePlus" id="Q9UJV8"/>
<dbReference type="BioMuta" id="PURG"/>
<dbReference type="DMDM" id="74720969"/>
<dbReference type="jPOST" id="Q9UJV8"/>
<dbReference type="MassIVE" id="Q9UJV8"/>
<dbReference type="PaxDb" id="9606-ENSP00000418721"/>
<dbReference type="PeptideAtlas" id="Q9UJV8"/>
<dbReference type="ProteomicsDB" id="84664">
    <molecule id="Q9UJV8-1"/>
</dbReference>
<dbReference type="ProteomicsDB" id="84665">
    <molecule id="Q9UJV8-2"/>
</dbReference>
<dbReference type="Antibodypedia" id="23258">
    <property type="antibodies" value="84 antibodies from 15 providers"/>
</dbReference>
<dbReference type="DNASU" id="29942"/>
<dbReference type="Ensembl" id="ENST00000339382.3">
    <molecule id="Q9UJV8-2"/>
    <property type="protein sequence ID" value="ENSP00000345168.2"/>
    <property type="gene ID" value="ENSG00000172733.12"/>
</dbReference>
<dbReference type="Ensembl" id="ENST00000475541.2">
    <molecule id="Q9UJV8-1"/>
    <property type="protein sequence ID" value="ENSP00000418721.1"/>
    <property type="gene ID" value="ENSG00000172733.12"/>
</dbReference>
<dbReference type="Ensembl" id="ENST00000523392.2">
    <molecule id="Q9UJV8-1"/>
    <property type="protein sequence ID" value="ENSP00000466881.2"/>
    <property type="gene ID" value="ENSG00000172733.12"/>
</dbReference>
<dbReference type="GeneID" id="29942"/>
<dbReference type="KEGG" id="hsa:29942"/>
<dbReference type="MANE-Select" id="ENST00000523392.2">
    <property type="protein sequence ID" value="ENSP00000466881.2"/>
    <property type="RefSeq nucleotide sequence ID" value="NM_001323311.2"/>
    <property type="RefSeq protein sequence ID" value="NP_001310240.1"/>
</dbReference>
<dbReference type="UCSC" id="uc003xim.2">
    <molecule id="Q9UJV8-1"/>
    <property type="organism name" value="human"/>
</dbReference>
<dbReference type="AGR" id="HGNC:17930"/>
<dbReference type="CTD" id="29942"/>
<dbReference type="DisGeNET" id="29942"/>
<dbReference type="GeneCards" id="PURG"/>
<dbReference type="HGNC" id="HGNC:17930">
    <property type="gene designation" value="PURG"/>
</dbReference>
<dbReference type="HPA" id="ENSG00000172733">
    <property type="expression patterns" value="Tissue enhanced (brain, retina)"/>
</dbReference>
<dbReference type="MIM" id="618041">
    <property type="type" value="gene"/>
</dbReference>
<dbReference type="neXtProt" id="NX_Q9UJV8"/>
<dbReference type="OpenTargets" id="ENSG00000172733"/>
<dbReference type="PharmGKB" id="PA134879671"/>
<dbReference type="VEuPathDB" id="HostDB:ENSG00000172733"/>
<dbReference type="eggNOG" id="KOG3074">
    <property type="taxonomic scope" value="Eukaryota"/>
</dbReference>
<dbReference type="GeneTree" id="ENSGT00950000183162"/>
<dbReference type="HOGENOM" id="CLU_057873_1_1_1"/>
<dbReference type="InParanoid" id="Q9UJV8"/>
<dbReference type="OMA" id="FHCCQIQ"/>
<dbReference type="OrthoDB" id="523901at2759"/>
<dbReference type="PAN-GO" id="Q9UJV8">
    <property type="GO annotations" value="5 GO annotations based on evolutionary models"/>
</dbReference>
<dbReference type="PhylomeDB" id="Q9UJV8"/>
<dbReference type="TreeFam" id="TF313701"/>
<dbReference type="PathwayCommons" id="Q9UJV8"/>
<dbReference type="SignaLink" id="Q9UJV8"/>
<dbReference type="BioGRID-ORCS" id="29942">
    <property type="hits" value="5 hits in 1154 CRISPR screens"/>
</dbReference>
<dbReference type="ChiTaRS" id="PURG">
    <property type="organism name" value="human"/>
</dbReference>
<dbReference type="GenomeRNAi" id="29942"/>
<dbReference type="Pharos" id="Q9UJV8">
    <property type="development level" value="Tbio"/>
</dbReference>
<dbReference type="PRO" id="PR:Q9UJV8"/>
<dbReference type="Proteomes" id="UP000005640">
    <property type="component" value="Chromosome 8"/>
</dbReference>
<dbReference type="RNAct" id="Q9UJV8">
    <property type="molecule type" value="protein"/>
</dbReference>
<dbReference type="Bgee" id="ENSG00000172733">
    <property type="expression patterns" value="Expressed in sperm and 127 other cell types or tissues"/>
</dbReference>
<dbReference type="ExpressionAtlas" id="Q9UJV8">
    <property type="expression patterns" value="baseline and differential"/>
</dbReference>
<dbReference type="GO" id="GO:0005634">
    <property type="term" value="C:nucleus"/>
    <property type="evidence" value="ECO:0000318"/>
    <property type="project" value="GO_Central"/>
</dbReference>
<dbReference type="GO" id="GO:0045202">
    <property type="term" value="C:synapse"/>
    <property type="evidence" value="ECO:0007669"/>
    <property type="project" value="Ensembl"/>
</dbReference>
<dbReference type="GO" id="GO:0000981">
    <property type="term" value="F:DNA-binding transcription factor activity, RNA polymerase II-specific"/>
    <property type="evidence" value="ECO:0000318"/>
    <property type="project" value="GO_Central"/>
</dbReference>
<dbReference type="GO" id="GO:0032422">
    <property type="term" value="F:purine-rich negative regulatory element binding"/>
    <property type="evidence" value="ECO:0000318"/>
    <property type="project" value="GO_Central"/>
</dbReference>
<dbReference type="GO" id="GO:0003723">
    <property type="term" value="F:RNA binding"/>
    <property type="evidence" value="ECO:0007005"/>
    <property type="project" value="UniProtKB"/>
</dbReference>
<dbReference type="GO" id="GO:0000977">
    <property type="term" value="F:RNA polymerase II transcription regulatory region sequence-specific DNA binding"/>
    <property type="evidence" value="ECO:0000318"/>
    <property type="project" value="GO_Central"/>
</dbReference>
<dbReference type="GO" id="GO:0006357">
    <property type="term" value="P:regulation of transcription by RNA polymerase II"/>
    <property type="evidence" value="ECO:0000318"/>
    <property type="project" value="GO_Central"/>
</dbReference>
<dbReference type="FunFam" id="3.10.450.700:FF:000001">
    <property type="entry name" value="Purine-rich element binding protein A"/>
    <property type="match status" value="1"/>
</dbReference>
<dbReference type="FunFam" id="3.30.2450.30:FF:000002">
    <property type="entry name" value="purine-rich element-binding protein gamma isoform X2"/>
    <property type="match status" value="1"/>
</dbReference>
<dbReference type="Gene3D" id="3.10.450.700">
    <property type="match status" value="1"/>
</dbReference>
<dbReference type="Gene3D" id="3.30.2450.30">
    <property type="match status" value="1"/>
</dbReference>
<dbReference type="InterPro" id="IPR006628">
    <property type="entry name" value="PUR-bd_fam"/>
</dbReference>
<dbReference type="PANTHER" id="PTHR12611">
    <property type="entry name" value="PUR-TRANSCRIPTIONAL ACTIVATOR"/>
    <property type="match status" value="1"/>
</dbReference>
<dbReference type="PANTHER" id="PTHR12611:SF3">
    <property type="entry name" value="PURINE-RICH ELEMENT-BINDING PROTEIN GAMMA"/>
    <property type="match status" value="1"/>
</dbReference>
<dbReference type="Pfam" id="PF04845">
    <property type="entry name" value="PurA"/>
    <property type="match status" value="1"/>
</dbReference>
<dbReference type="SMART" id="SM00712">
    <property type="entry name" value="PUR"/>
    <property type="match status" value="3"/>
</dbReference>
<gene>
    <name type="primary">PURG</name>
</gene>
<proteinExistence type="evidence at protein level"/>
<protein>
    <recommendedName>
        <fullName>Purine-rich element-binding protein gamma</fullName>
        <shortName>Purine-rich element-binding protein G</shortName>
    </recommendedName>
</protein>
<sequence length="347" mass="39556">MERARRRGGGGGRGRGGKNVGGSGLSKSRLYPQAQHSHYPHYAASATPNQAGGAAEIQELASKRVDIQKKRFYLDVKQSSRGRFLKIAEVWIGRGRQDNIRKSKLTLSLSVAAELKDCLGDFIEHYAHLGLKGHRQEHGHSKEQGSRRRQKHSAPSPPVSVGSEEHPHSVLKTDYIERDNRKYYLDLKENQRGRFLRIRQTMMRGTGMIGYFGHSLGQEQTIVLPAQGMIEFRDALVQLIEDYGEGDIEERRGGDDDPLELPEGTSFRVDNKRFYFDVGSNKYGIFLKVSEVRPPYRNTITVPFKAWTRFGENFIKYEEEMRKICNSHKEKRMDGRKASGEEQECLD</sequence>
<reference key="1">
    <citation type="journal article" date="2002" name="Nucleic Acids Res.">
        <title>Distinct proteins encoded by alternative transcripts of the PURG gene, located contrapodal to WRN on chromosome 8, determined by differential termination/polyadenylation.</title>
        <authorList>
            <person name="Liu H."/>
            <person name="Johnson E.M."/>
        </authorList>
    </citation>
    <scope>NUCLEOTIDE SEQUENCE [MRNA] (ISOFORMS 1 AND 2)</scope>
    <scope>TISSUE SPECIFICITY</scope>
    <source>
        <tissue>Lung</tissue>
    </source>
</reference>
<reference key="2">
    <citation type="journal article" date="2004" name="Genome Res.">
        <title>The status, quality, and expansion of the NIH full-length cDNA project: the Mammalian Gene Collection (MGC).</title>
        <authorList>
            <consortium name="The MGC Project Team"/>
        </authorList>
    </citation>
    <scope>NUCLEOTIDE SEQUENCE [LARGE SCALE MRNA] (ISOFORM 1)</scope>
</reference>
<reference key="3">
    <citation type="journal article" date="2006" name="Science">
        <title>The consensus coding sequences of human breast and colorectal cancers.</title>
        <authorList>
            <person name="Sjoeblom T."/>
            <person name="Jones S."/>
            <person name="Wood L.D."/>
            <person name="Parsons D.W."/>
            <person name="Lin J."/>
            <person name="Barber T.D."/>
            <person name="Mandelker D."/>
            <person name="Leary R.J."/>
            <person name="Ptak J."/>
            <person name="Silliman N."/>
            <person name="Szabo S."/>
            <person name="Buckhaults P."/>
            <person name="Farrell C."/>
            <person name="Meeh P."/>
            <person name="Markowitz S.D."/>
            <person name="Willis J."/>
            <person name="Dawson D."/>
            <person name="Willson J.K.V."/>
            <person name="Gazdar A.F."/>
            <person name="Hartigan J."/>
            <person name="Wu L."/>
            <person name="Liu C."/>
            <person name="Parmigiani G."/>
            <person name="Park B.H."/>
            <person name="Bachman K.E."/>
            <person name="Papadopoulos N."/>
            <person name="Vogelstein B."/>
            <person name="Kinzler K.W."/>
            <person name="Velculescu V.E."/>
        </authorList>
    </citation>
    <scope>VARIANT [LARGE SCALE ANALYSIS] THR-316</scope>
</reference>
<accession>Q9UJV8</accession>
<accession>Q8TE64</accession>